<dbReference type="EMBL" id="Z38002">
    <property type="protein sequence ID" value="CAA86103.1"/>
    <property type="molecule type" value="Genomic_DNA"/>
</dbReference>
<dbReference type="EMBL" id="AL009126">
    <property type="protein sequence ID" value="CAB15714.1"/>
    <property type="molecule type" value="Genomic_DNA"/>
</dbReference>
<dbReference type="PIR" id="I40474">
    <property type="entry name" value="I40474"/>
</dbReference>
<dbReference type="RefSeq" id="NP_391578.1">
    <property type="nucleotide sequence ID" value="NC_000964.3"/>
</dbReference>
<dbReference type="RefSeq" id="WP_003227654.1">
    <property type="nucleotide sequence ID" value="NZ_OZ025638.1"/>
</dbReference>
<dbReference type="FunCoup" id="P39151">
    <property type="interactions" value="75"/>
</dbReference>
<dbReference type="STRING" id="224308.BSU36970"/>
<dbReference type="PaxDb" id="224308-BSU36970"/>
<dbReference type="EnsemblBacteria" id="CAB15714">
    <property type="protein sequence ID" value="CAB15714"/>
    <property type="gene ID" value="BSU_36970"/>
</dbReference>
<dbReference type="GeneID" id="937017"/>
<dbReference type="KEGG" id="bsu:BSU36970"/>
<dbReference type="PATRIC" id="fig|224308.179.peg.4004"/>
<dbReference type="eggNOG" id="ENOG5031K93">
    <property type="taxonomic scope" value="Bacteria"/>
</dbReference>
<dbReference type="InParanoid" id="P39151"/>
<dbReference type="OrthoDB" id="9793324at2"/>
<dbReference type="PhylomeDB" id="P39151"/>
<dbReference type="BioCyc" id="BSUB:BSU36970-MONOMER"/>
<dbReference type="Proteomes" id="UP000001570">
    <property type="component" value="Chromosome"/>
</dbReference>
<dbReference type="GO" id="GO:0030435">
    <property type="term" value="P:sporulation resulting in formation of a cellular spore"/>
    <property type="evidence" value="ECO:0007669"/>
    <property type="project" value="UniProtKB-KW"/>
</dbReference>
<dbReference type="InterPro" id="IPR014202">
    <property type="entry name" value="Spore_II_R"/>
</dbReference>
<dbReference type="NCBIfam" id="TIGR02837">
    <property type="entry name" value="spore_II_R"/>
    <property type="match status" value="1"/>
</dbReference>
<dbReference type="Pfam" id="PF09551">
    <property type="entry name" value="Spore_II_R"/>
    <property type="match status" value="1"/>
</dbReference>
<feature type="chain" id="PRO_0000072061" description="Stage II sporulation protein R">
    <location>
        <begin position="1"/>
        <end position="224"/>
    </location>
</feature>
<name>SP2R_BACSU</name>
<accession>P39151</accession>
<reference key="1">
    <citation type="submission" date="1994-10" db="EMBL/GenBank/DDBJ databases">
        <authorList>
            <person name="Glaser P."/>
            <person name="Danchin A."/>
        </authorList>
    </citation>
    <scope>NUCLEOTIDE SEQUENCE [GENOMIC DNA]</scope>
    <source>
        <strain>168</strain>
    </source>
</reference>
<reference key="2">
    <citation type="journal article" date="1997" name="Nature">
        <title>The complete genome sequence of the Gram-positive bacterium Bacillus subtilis.</title>
        <authorList>
            <person name="Kunst F."/>
            <person name="Ogasawara N."/>
            <person name="Moszer I."/>
            <person name="Albertini A.M."/>
            <person name="Alloni G."/>
            <person name="Azevedo V."/>
            <person name="Bertero M.G."/>
            <person name="Bessieres P."/>
            <person name="Bolotin A."/>
            <person name="Borchert S."/>
            <person name="Borriss R."/>
            <person name="Boursier L."/>
            <person name="Brans A."/>
            <person name="Braun M."/>
            <person name="Brignell S.C."/>
            <person name="Bron S."/>
            <person name="Brouillet S."/>
            <person name="Bruschi C.V."/>
            <person name="Caldwell B."/>
            <person name="Capuano V."/>
            <person name="Carter N.M."/>
            <person name="Choi S.-K."/>
            <person name="Codani J.-J."/>
            <person name="Connerton I.F."/>
            <person name="Cummings N.J."/>
            <person name="Daniel R.A."/>
            <person name="Denizot F."/>
            <person name="Devine K.M."/>
            <person name="Duesterhoeft A."/>
            <person name="Ehrlich S.D."/>
            <person name="Emmerson P.T."/>
            <person name="Entian K.-D."/>
            <person name="Errington J."/>
            <person name="Fabret C."/>
            <person name="Ferrari E."/>
            <person name="Foulger D."/>
            <person name="Fritz C."/>
            <person name="Fujita M."/>
            <person name="Fujita Y."/>
            <person name="Fuma S."/>
            <person name="Galizzi A."/>
            <person name="Galleron N."/>
            <person name="Ghim S.-Y."/>
            <person name="Glaser P."/>
            <person name="Goffeau A."/>
            <person name="Golightly E.J."/>
            <person name="Grandi G."/>
            <person name="Guiseppi G."/>
            <person name="Guy B.J."/>
            <person name="Haga K."/>
            <person name="Haiech J."/>
            <person name="Harwood C.R."/>
            <person name="Henaut A."/>
            <person name="Hilbert H."/>
            <person name="Holsappel S."/>
            <person name="Hosono S."/>
            <person name="Hullo M.-F."/>
            <person name="Itaya M."/>
            <person name="Jones L.-M."/>
            <person name="Joris B."/>
            <person name="Karamata D."/>
            <person name="Kasahara Y."/>
            <person name="Klaerr-Blanchard M."/>
            <person name="Klein C."/>
            <person name="Kobayashi Y."/>
            <person name="Koetter P."/>
            <person name="Koningstein G."/>
            <person name="Krogh S."/>
            <person name="Kumano M."/>
            <person name="Kurita K."/>
            <person name="Lapidus A."/>
            <person name="Lardinois S."/>
            <person name="Lauber J."/>
            <person name="Lazarevic V."/>
            <person name="Lee S.-M."/>
            <person name="Levine A."/>
            <person name="Liu H."/>
            <person name="Masuda S."/>
            <person name="Mauel C."/>
            <person name="Medigue C."/>
            <person name="Medina N."/>
            <person name="Mellado R.P."/>
            <person name="Mizuno M."/>
            <person name="Moestl D."/>
            <person name="Nakai S."/>
            <person name="Noback M."/>
            <person name="Noone D."/>
            <person name="O'Reilly M."/>
            <person name="Ogawa K."/>
            <person name="Ogiwara A."/>
            <person name="Oudega B."/>
            <person name="Park S.-H."/>
            <person name="Parro V."/>
            <person name="Pohl T.M."/>
            <person name="Portetelle D."/>
            <person name="Porwollik S."/>
            <person name="Prescott A.M."/>
            <person name="Presecan E."/>
            <person name="Pujic P."/>
            <person name="Purnelle B."/>
            <person name="Rapoport G."/>
            <person name="Rey M."/>
            <person name="Reynolds S."/>
            <person name="Rieger M."/>
            <person name="Rivolta C."/>
            <person name="Rocha E."/>
            <person name="Roche B."/>
            <person name="Rose M."/>
            <person name="Sadaie Y."/>
            <person name="Sato T."/>
            <person name="Scanlan E."/>
            <person name="Schleich S."/>
            <person name="Schroeter R."/>
            <person name="Scoffone F."/>
            <person name="Sekiguchi J."/>
            <person name="Sekowska A."/>
            <person name="Seror S.J."/>
            <person name="Serror P."/>
            <person name="Shin B.-S."/>
            <person name="Soldo B."/>
            <person name="Sorokin A."/>
            <person name="Tacconi E."/>
            <person name="Takagi T."/>
            <person name="Takahashi H."/>
            <person name="Takemaru K."/>
            <person name="Takeuchi M."/>
            <person name="Tamakoshi A."/>
            <person name="Tanaka T."/>
            <person name="Terpstra P."/>
            <person name="Tognoni A."/>
            <person name="Tosato V."/>
            <person name="Uchiyama S."/>
            <person name="Vandenbol M."/>
            <person name="Vannier F."/>
            <person name="Vassarotti A."/>
            <person name="Viari A."/>
            <person name="Wambutt R."/>
            <person name="Wedler E."/>
            <person name="Wedler H."/>
            <person name="Weitzenegger T."/>
            <person name="Winters P."/>
            <person name="Wipat A."/>
            <person name="Yamamoto H."/>
            <person name="Yamane K."/>
            <person name="Yasumoto K."/>
            <person name="Yata K."/>
            <person name="Yoshida K."/>
            <person name="Yoshikawa H.-F."/>
            <person name="Zumstein E."/>
            <person name="Yoshikawa H."/>
            <person name="Danchin A."/>
        </authorList>
    </citation>
    <scope>NUCLEOTIDE SEQUENCE [LARGE SCALE GENOMIC DNA]</scope>
    <source>
        <strain>168</strain>
    </source>
</reference>
<gene>
    <name type="primary">spoIIR</name>
    <name type="ordered locus">BSU36970</name>
    <name type="ORF">ipc-27d</name>
</gene>
<keyword id="KW-1185">Reference proteome</keyword>
<keyword id="KW-0749">Sporulation</keyword>
<organism>
    <name type="scientific">Bacillus subtilis (strain 168)</name>
    <dbReference type="NCBI Taxonomy" id="224308"/>
    <lineage>
        <taxon>Bacteria</taxon>
        <taxon>Bacillati</taxon>
        <taxon>Bacillota</taxon>
        <taxon>Bacilli</taxon>
        <taxon>Bacillales</taxon>
        <taxon>Bacillaceae</taxon>
        <taxon>Bacillus</taxon>
    </lineage>
</organism>
<protein>
    <recommendedName>
        <fullName>Stage II sporulation protein R</fullName>
    </recommendedName>
</protein>
<sequence>MKKTVIICIYIFLLLSGALVGLAKEETAQKSENQPVVIPDQAIRLRILANSDSDQDQQLKRHIRDAVNKEITTWVKDITSIEEARRVIRSKLPEIKAIAKETMEKEGANQSISVDFDKISFPTKLYGNMVYPAGEYEAILITLGNGDGANWWCVLFPPLCFLDFSNGEAVKEQEDKEASKKQTEKVLEDVTAKAEKAKKEENEEKEDGTEVKFFLVEWISDLFS</sequence>
<proteinExistence type="predicted"/>